<keyword id="KW-0002">3D-structure</keyword>
<keyword id="KW-0275">Fatty acid biosynthesis</keyword>
<keyword id="KW-0276">Fatty acid metabolism</keyword>
<keyword id="KW-0444">Lipid biosynthesis</keyword>
<keyword id="KW-0443">Lipid metabolism</keyword>
<keyword id="KW-0520">NAD</keyword>
<keyword id="KW-0560">Oxidoreductase</keyword>
<keyword id="KW-1185">Reference proteome</keyword>
<sequence length="270" mass="29725">MGLLEGKRALITGVANERSIAYGIAKSFHREGAQLAFTYATPKLEKRVREIAKGFGSDLVVKCDVSLDEDIKNLKKFLEENWGSLDIIVHSIAYAPKEEFKGGVIDTSREGFKIAMDISVYSLIALTRELLPLMEGRNGAIVTLSYYGAEKVVPHYNVMGIAKAALESTVRYLAYDIAKHGHRINAISAGPVKTLAAYSITGFHLLMEHTTKVNPFGKPITIEDVGDTAVFLCSDWARAITGEVVHVDNGYHIMGVFGREEEIKKEVYGD</sequence>
<evidence type="ECO:0000250" key="1"/>
<evidence type="ECO:0000269" key="2">
    <source ref="2"/>
</evidence>
<evidence type="ECO:0000305" key="3"/>
<evidence type="ECO:0007829" key="4">
    <source>
        <dbReference type="PDB" id="2P91"/>
    </source>
</evidence>
<proteinExistence type="evidence at protein level"/>
<organism>
    <name type="scientific">Aquifex aeolicus (strain VF5)</name>
    <dbReference type="NCBI Taxonomy" id="224324"/>
    <lineage>
        <taxon>Bacteria</taxon>
        <taxon>Pseudomonadati</taxon>
        <taxon>Aquificota</taxon>
        <taxon>Aquificia</taxon>
        <taxon>Aquificales</taxon>
        <taxon>Aquificaceae</taxon>
        <taxon>Aquifex</taxon>
    </lineage>
</organism>
<reference key="1">
    <citation type="journal article" date="1998" name="Nature">
        <title>The complete genome of the hyperthermophilic bacterium Aquifex aeolicus.</title>
        <authorList>
            <person name="Deckert G."/>
            <person name="Warren P.V."/>
            <person name="Gaasterland T."/>
            <person name="Young W.G."/>
            <person name="Lenox A.L."/>
            <person name="Graham D.E."/>
            <person name="Overbeek R."/>
            <person name="Snead M.A."/>
            <person name="Keller M."/>
            <person name="Aujay M."/>
            <person name="Huber R."/>
            <person name="Feldman R.A."/>
            <person name="Short J.M."/>
            <person name="Olsen G.J."/>
            <person name="Swanson R.V."/>
        </authorList>
    </citation>
    <scope>NUCLEOTIDE SEQUENCE [LARGE SCALE GENOMIC DNA]</scope>
    <source>
        <strain>VF5</strain>
    </source>
</reference>
<reference key="2">
    <citation type="submission" date="2007-04" db="PDB data bank">
        <title>Crystal structure of enoyl-[acyl-carrier-protein] reductase (NADH) from Aquifex aeolicus VF5.</title>
        <authorList>
            <consortium name="Southeast collaboratory for structural genomics (SECSG)"/>
        </authorList>
    </citation>
    <scope>X-RAY CRYSTALLOGRAPHY (2.0 ANGSTROMS)</scope>
    <scope>SUBUNIT</scope>
</reference>
<dbReference type="EC" id="1.3.1.9"/>
<dbReference type="EMBL" id="AE000657">
    <property type="protein sequence ID" value="AAC07465.1"/>
    <property type="status" value="ALT_INIT"/>
    <property type="molecule type" value="Genomic_DNA"/>
</dbReference>
<dbReference type="PIR" id="G70434">
    <property type="entry name" value="G70434"/>
</dbReference>
<dbReference type="RefSeq" id="NP_214070.1">
    <property type="nucleotide sequence ID" value="NC_000918.1"/>
</dbReference>
<dbReference type="RefSeq" id="WP_164930732.1">
    <property type="nucleotide sequence ID" value="NC_000918.1"/>
</dbReference>
<dbReference type="PDB" id="2P91">
    <property type="method" value="X-ray"/>
    <property type="resolution" value="2.00 A"/>
    <property type="chains" value="A/B/C/D=1-270"/>
</dbReference>
<dbReference type="PDBsum" id="2P91"/>
<dbReference type="SMR" id="O67505"/>
<dbReference type="FunCoup" id="O67505">
    <property type="interactions" value="330"/>
</dbReference>
<dbReference type="STRING" id="224324.aq_1552"/>
<dbReference type="EnsemblBacteria" id="AAC07465">
    <property type="protein sequence ID" value="AAC07465"/>
    <property type="gene ID" value="aq_1552"/>
</dbReference>
<dbReference type="KEGG" id="aae:aq_1552"/>
<dbReference type="PATRIC" id="fig|224324.8.peg.1204"/>
<dbReference type="eggNOG" id="COG0623">
    <property type="taxonomic scope" value="Bacteria"/>
</dbReference>
<dbReference type="HOGENOM" id="CLU_010194_10_1_0"/>
<dbReference type="InParanoid" id="O67505"/>
<dbReference type="OrthoDB" id="9803628at2"/>
<dbReference type="UniPathway" id="UPA00094"/>
<dbReference type="EvolutionaryTrace" id="O67505"/>
<dbReference type="Proteomes" id="UP000000798">
    <property type="component" value="Chromosome"/>
</dbReference>
<dbReference type="GO" id="GO:0004318">
    <property type="term" value="F:enoyl-[acyl-carrier-protein] reductase (NADH) activity"/>
    <property type="evidence" value="ECO:0000250"/>
    <property type="project" value="UniProtKB"/>
</dbReference>
<dbReference type="GO" id="GO:0042802">
    <property type="term" value="F:identical protein binding"/>
    <property type="evidence" value="ECO:0000250"/>
    <property type="project" value="UniProtKB"/>
</dbReference>
<dbReference type="GO" id="GO:0030497">
    <property type="term" value="P:fatty acid elongation"/>
    <property type="evidence" value="ECO:0000250"/>
    <property type="project" value="UniProtKB"/>
</dbReference>
<dbReference type="CDD" id="cd05372">
    <property type="entry name" value="ENR_SDR"/>
    <property type="match status" value="1"/>
</dbReference>
<dbReference type="FunFam" id="3.40.50.720:FF:000054">
    <property type="entry name" value="Enoyl-[acyl-carrier-protein] reductase [NADH]"/>
    <property type="match status" value="1"/>
</dbReference>
<dbReference type="Gene3D" id="3.40.50.720">
    <property type="entry name" value="NAD(P)-binding Rossmann-like Domain"/>
    <property type="match status" value="1"/>
</dbReference>
<dbReference type="InterPro" id="IPR014358">
    <property type="entry name" value="Enoyl-ACP_Rdtase_NADH"/>
</dbReference>
<dbReference type="InterPro" id="IPR036291">
    <property type="entry name" value="NAD(P)-bd_dom_sf"/>
</dbReference>
<dbReference type="InterPro" id="IPR002347">
    <property type="entry name" value="SDR_fam"/>
</dbReference>
<dbReference type="PANTHER" id="PTHR43159">
    <property type="entry name" value="ENOYL-[ACYL-CARRIER-PROTEIN] REDUCTASE"/>
    <property type="match status" value="1"/>
</dbReference>
<dbReference type="PANTHER" id="PTHR43159:SF2">
    <property type="entry name" value="ENOYL-[ACYL-CARRIER-PROTEIN] REDUCTASE [NADH], CHLOROPLASTIC"/>
    <property type="match status" value="1"/>
</dbReference>
<dbReference type="Pfam" id="PF13561">
    <property type="entry name" value="adh_short_C2"/>
    <property type="match status" value="1"/>
</dbReference>
<dbReference type="PIRSF" id="PIRSF000094">
    <property type="entry name" value="Enoyl-ACP_rdct"/>
    <property type="match status" value="1"/>
</dbReference>
<dbReference type="PRINTS" id="PR00081">
    <property type="entry name" value="GDHRDH"/>
</dbReference>
<dbReference type="SUPFAM" id="SSF51735">
    <property type="entry name" value="NAD(P)-binding Rossmann-fold domains"/>
    <property type="match status" value="1"/>
</dbReference>
<protein>
    <recommendedName>
        <fullName>Enoyl-[acyl-carrier-protein] reductase [NADH] FabI</fullName>
        <shortName>ENR</shortName>
        <ecNumber>1.3.1.9</ecNumber>
    </recommendedName>
    <alternativeName>
        <fullName>NADH-dependent enoyl-ACP reductase</fullName>
    </alternativeName>
</protein>
<comment type="function">
    <text evidence="1">Catalyzes the reduction of a carbon-carbon double bond in an enoyl moiety that is covalently linked to an acyl carrier protein (ACP). Involved in the elongation cycle of fatty acid which are used in the lipid metabolism (By similarity).</text>
</comment>
<comment type="catalytic activity">
    <reaction>
        <text>a 2,3-saturated acyl-[ACP] + NAD(+) = a (2E)-enoyl-[ACP] + NADH + H(+)</text>
        <dbReference type="Rhea" id="RHEA:10240"/>
        <dbReference type="Rhea" id="RHEA-COMP:9925"/>
        <dbReference type="Rhea" id="RHEA-COMP:9926"/>
        <dbReference type="ChEBI" id="CHEBI:15378"/>
        <dbReference type="ChEBI" id="CHEBI:57540"/>
        <dbReference type="ChEBI" id="CHEBI:57945"/>
        <dbReference type="ChEBI" id="CHEBI:78784"/>
        <dbReference type="ChEBI" id="CHEBI:78785"/>
        <dbReference type="EC" id="1.3.1.9"/>
    </reaction>
</comment>
<comment type="pathway">
    <text>Lipid metabolism; fatty acid biosynthesis.</text>
</comment>
<comment type="subunit">
    <text evidence="2">Homotetramer.</text>
</comment>
<comment type="similarity">
    <text evidence="3">Belongs to the short-chain dehydrogenases/reductases (SDR) family. FabI subfamily.</text>
</comment>
<comment type="sequence caution" evidence="3">
    <conflict type="erroneous initiation">
        <sequence resource="EMBL-CDS" id="AAC07465"/>
    </conflict>
    <text>Extended N-terminus.</text>
</comment>
<name>FABI_AQUAE</name>
<accession>O67505</accession>
<gene>
    <name type="primary">fabI</name>
    <name type="ordered locus">aq_1552</name>
</gene>
<feature type="chain" id="PRO_0000054894" description="Enoyl-[acyl-carrier-protein] reductase [NADH] FabI">
    <location>
        <begin position="1"/>
        <end position="270"/>
    </location>
</feature>
<feature type="active site" description="Proton acceptor" evidence="1">
    <location>
        <position position="146"/>
    </location>
</feature>
<feature type="active site" description="Proton acceptor" evidence="1">
    <location>
        <position position="156"/>
    </location>
</feature>
<feature type="binding site" evidence="1">
    <location>
        <position position="13"/>
    </location>
    <ligand>
        <name>NAD(+)</name>
        <dbReference type="ChEBI" id="CHEBI:57540"/>
    </ligand>
</feature>
<feature type="binding site" evidence="1">
    <location>
        <begin position="19"/>
        <end position="20"/>
    </location>
    <ligand>
        <name>NAD(+)</name>
        <dbReference type="ChEBI" id="CHEBI:57540"/>
    </ligand>
</feature>
<feature type="binding site" evidence="1">
    <location>
        <begin position="64"/>
        <end position="65"/>
    </location>
    <ligand>
        <name>NAD(+)</name>
        <dbReference type="ChEBI" id="CHEBI:57540"/>
    </ligand>
</feature>
<feature type="binding site" evidence="1">
    <location>
        <position position="92"/>
    </location>
    <ligand>
        <name>NAD(+)</name>
        <dbReference type="ChEBI" id="CHEBI:57540"/>
    </ligand>
</feature>
<feature type="binding site" evidence="1">
    <location>
        <position position="95"/>
    </location>
    <ligand>
        <name>substrate</name>
    </ligand>
</feature>
<feature type="binding site" evidence="1">
    <location>
        <position position="163"/>
    </location>
    <ligand>
        <name>NAD(+)</name>
        <dbReference type="ChEBI" id="CHEBI:57540"/>
    </ligand>
</feature>
<feature type="binding site" evidence="1">
    <location>
        <begin position="192"/>
        <end position="196"/>
    </location>
    <ligand>
        <name>NAD(+)</name>
        <dbReference type="ChEBI" id="CHEBI:57540"/>
    </ligand>
</feature>
<feature type="turn" evidence="4">
    <location>
        <begin position="3"/>
        <end position="6"/>
    </location>
</feature>
<feature type="strand" evidence="4">
    <location>
        <begin position="8"/>
        <end position="11"/>
    </location>
</feature>
<feature type="helix" evidence="4">
    <location>
        <begin position="20"/>
        <end position="30"/>
    </location>
</feature>
<feature type="strand" evidence="4">
    <location>
        <begin position="34"/>
        <end position="41"/>
    </location>
</feature>
<feature type="helix" evidence="4">
    <location>
        <begin position="42"/>
        <end position="44"/>
    </location>
</feature>
<feature type="helix" evidence="4">
    <location>
        <begin position="45"/>
        <end position="54"/>
    </location>
</feature>
<feature type="strand" evidence="4">
    <location>
        <begin position="60"/>
        <end position="62"/>
    </location>
</feature>
<feature type="helix" evidence="4">
    <location>
        <begin position="68"/>
        <end position="81"/>
    </location>
</feature>
<feature type="strand" evidence="4">
    <location>
        <begin position="87"/>
        <end position="90"/>
    </location>
</feature>
<feature type="helix" evidence="4">
    <location>
        <begin position="97"/>
        <end position="100"/>
    </location>
</feature>
<feature type="helix" evidence="4">
    <location>
        <begin position="104"/>
        <end position="106"/>
    </location>
</feature>
<feature type="helix" evidence="4">
    <location>
        <begin position="109"/>
        <end position="119"/>
    </location>
</feature>
<feature type="helix" evidence="4">
    <location>
        <begin position="121"/>
        <end position="130"/>
    </location>
</feature>
<feature type="helix" evidence="4">
    <location>
        <begin position="131"/>
        <end position="134"/>
    </location>
</feature>
<feature type="strand" evidence="4">
    <location>
        <begin position="140"/>
        <end position="145"/>
    </location>
</feature>
<feature type="helix" evidence="4">
    <location>
        <begin position="147"/>
        <end position="149"/>
    </location>
</feature>
<feature type="turn" evidence="4">
    <location>
        <begin position="154"/>
        <end position="157"/>
    </location>
</feature>
<feature type="helix" evidence="4">
    <location>
        <begin position="158"/>
        <end position="178"/>
    </location>
</feature>
<feature type="turn" evidence="4">
    <location>
        <begin position="179"/>
        <end position="181"/>
    </location>
</feature>
<feature type="strand" evidence="4">
    <location>
        <begin position="183"/>
        <end position="189"/>
    </location>
</feature>
<feature type="helix" evidence="4">
    <location>
        <begin position="203"/>
        <end position="213"/>
    </location>
</feature>
<feature type="helix" evidence="4">
    <location>
        <begin position="222"/>
        <end position="232"/>
    </location>
</feature>
<feature type="helix" evidence="4">
    <location>
        <begin position="235"/>
        <end position="237"/>
    </location>
</feature>
<feature type="strand" evidence="4">
    <location>
        <begin position="244"/>
        <end position="248"/>
    </location>
</feature>
<feature type="helix" evidence="4">
    <location>
        <begin position="251"/>
        <end position="253"/>
    </location>
</feature>